<reference key="1">
    <citation type="journal article" date="2004" name="Proc. Natl. Acad. Sci. U.S.A.">
        <title>The louse-borne human pathogen Bartonella quintana is a genomic derivative of the zoonotic agent Bartonella henselae.</title>
        <authorList>
            <person name="Alsmark U.C.M."/>
            <person name="Frank A.C."/>
            <person name="Karlberg E.O."/>
            <person name="Legault B.-A."/>
            <person name="Ardell D.H."/>
            <person name="Canbaeck B."/>
            <person name="Eriksson A.-S."/>
            <person name="Naeslund A.K."/>
            <person name="Handley S.A."/>
            <person name="Huvet M."/>
            <person name="La Scola B."/>
            <person name="Holmberg M."/>
            <person name="Andersson S.G.E."/>
        </authorList>
    </citation>
    <scope>NUCLEOTIDE SEQUENCE [LARGE SCALE GENOMIC DNA]</scope>
    <source>
        <strain>Toulouse</strain>
    </source>
</reference>
<comment type="function">
    <text evidence="1">Catalyzes the attachment of tyrosine to tRNA(Tyr) in a two-step reaction: tyrosine is first activated by ATP to form Tyr-AMP and then transferred to the acceptor end of tRNA(Tyr).</text>
</comment>
<comment type="catalytic activity">
    <reaction evidence="1">
        <text>tRNA(Tyr) + L-tyrosine + ATP = L-tyrosyl-tRNA(Tyr) + AMP + diphosphate + H(+)</text>
        <dbReference type="Rhea" id="RHEA:10220"/>
        <dbReference type="Rhea" id="RHEA-COMP:9706"/>
        <dbReference type="Rhea" id="RHEA-COMP:9707"/>
        <dbReference type="ChEBI" id="CHEBI:15378"/>
        <dbReference type="ChEBI" id="CHEBI:30616"/>
        <dbReference type="ChEBI" id="CHEBI:33019"/>
        <dbReference type="ChEBI" id="CHEBI:58315"/>
        <dbReference type="ChEBI" id="CHEBI:78442"/>
        <dbReference type="ChEBI" id="CHEBI:78536"/>
        <dbReference type="ChEBI" id="CHEBI:456215"/>
        <dbReference type="EC" id="6.1.1.1"/>
    </reaction>
</comment>
<comment type="subunit">
    <text evidence="1">Homodimer.</text>
</comment>
<comment type="subcellular location">
    <subcellularLocation>
        <location evidence="1">Cytoplasm</location>
    </subcellularLocation>
</comment>
<comment type="similarity">
    <text evidence="1">Belongs to the class-I aminoacyl-tRNA synthetase family. TyrS type 1 subfamily.</text>
</comment>
<proteinExistence type="inferred from homology"/>
<gene>
    <name evidence="1" type="primary">tyrS</name>
    <name type="ordered locus">BQ05920</name>
</gene>
<feature type="chain" id="PRO_0000234682" description="Tyrosine--tRNA ligase">
    <location>
        <begin position="1"/>
        <end position="417"/>
    </location>
</feature>
<feature type="domain" description="S4 RNA-binding" evidence="1">
    <location>
        <begin position="350"/>
        <end position="417"/>
    </location>
</feature>
<feature type="short sequence motif" description="'HIGH' region">
    <location>
        <begin position="44"/>
        <end position="53"/>
    </location>
</feature>
<feature type="short sequence motif" description="'KMSKS' region">
    <location>
        <begin position="236"/>
        <end position="240"/>
    </location>
</feature>
<feature type="binding site" evidence="1">
    <location>
        <position position="39"/>
    </location>
    <ligand>
        <name>L-tyrosine</name>
        <dbReference type="ChEBI" id="CHEBI:58315"/>
    </ligand>
</feature>
<feature type="binding site" evidence="1">
    <location>
        <position position="176"/>
    </location>
    <ligand>
        <name>L-tyrosine</name>
        <dbReference type="ChEBI" id="CHEBI:58315"/>
    </ligand>
</feature>
<feature type="binding site" evidence="1">
    <location>
        <position position="180"/>
    </location>
    <ligand>
        <name>L-tyrosine</name>
        <dbReference type="ChEBI" id="CHEBI:58315"/>
    </ligand>
</feature>
<feature type="binding site" evidence="1">
    <location>
        <position position="239"/>
    </location>
    <ligand>
        <name>ATP</name>
        <dbReference type="ChEBI" id="CHEBI:30616"/>
    </ligand>
</feature>
<accession>Q6FZW4</accession>
<organism>
    <name type="scientific">Bartonella quintana (strain Toulouse)</name>
    <name type="common">Rochalimaea quintana</name>
    <dbReference type="NCBI Taxonomy" id="283165"/>
    <lineage>
        <taxon>Bacteria</taxon>
        <taxon>Pseudomonadati</taxon>
        <taxon>Pseudomonadota</taxon>
        <taxon>Alphaproteobacteria</taxon>
        <taxon>Hyphomicrobiales</taxon>
        <taxon>Bartonellaceae</taxon>
        <taxon>Bartonella</taxon>
    </lineage>
</organism>
<name>SYY_BARQU</name>
<keyword id="KW-0030">Aminoacyl-tRNA synthetase</keyword>
<keyword id="KW-0067">ATP-binding</keyword>
<keyword id="KW-0963">Cytoplasm</keyword>
<keyword id="KW-0436">Ligase</keyword>
<keyword id="KW-0547">Nucleotide-binding</keyword>
<keyword id="KW-0648">Protein biosynthesis</keyword>
<keyword id="KW-0694">RNA-binding</keyword>
<dbReference type="EC" id="6.1.1.1" evidence="1"/>
<dbReference type="EMBL" id="BX897700">
    <property type="protein sequence ID" value="CAF26084.1"/>
    <property type="molecule type" value="Genomic_DNA"/>
</dbReference>
<dbReference type="RefSeq" id="WP_011179353.1">
    <property type="nucleotide sequence ID" value="NC_005955.1"/>
</dbReference>
<dbReference type="SMR" id="Q6FZW4"/>
<dbReference type="KEGG" id="bqu:BQ05920"/>
<dbReference type="eggNOG" id="COG0162">
    <property type="taxonomic scope" value="Bacteria"/>
</dbReference>
<dbReference type="HOGENOM" id="CLU_024003_0_3_5"/>
<dbReference type="OrthoDB" id="9804243at2"/>
<dbReference type="Proteomes" id="UP000000597">
    <property type="component" value="Chromosome"/>
</dbReference>
<dbReference type="GO" id="GO:0005829">
    <property type="term" value="C:cytosol"/>
    <property type="evidence" value="ECO:0007669"/>
    <property type="project" value="TreeGrafter"/>
</dbReference>
<dbReference type="GO" id="GO:0005524">
    <property type="term" value="F:ATP binding"/>
    <property type="evidence" value="ECO:0007669"/>
    <property type="project" value="UniProtKB-UniRule"/>
</dbReference>
<dbReference type="GO" id="GO:0003723">
    <property type="term" value="F:RNA binding"/>
    <property type="evidence" value="ECO:0007669"/>
    <property type="project" value="UniProtKB-KW"/>
</dbReference>
<dbReference type="GO" id="GO:0004831">
    <property type="term" value="F:tyrosine-tRNA ligase activity"/>
    <property type="evidence" value="ECO:0007669"/>
    <property type="project" value="UniProtKB-UniRule"/>
</dbReference>
<dbReference type="GO" id="GO:0006437">
    <property type="term" value="P:tyrosyl-tRNA aminoacylation"/>
    <property type="evidence" value="ECO:0007669"/>
    <property type="project" value="UniProtKB-UniRule"/>
</dbReference>
<dbReference type="CDD" id="cd00165">
    <property type="entry name" value="S4"/>
    <property type="match status" value="1"/>
</dbReference>
<dbReference type="CDD" id="cd00805">
    <property type="entry name" value="TyrRS_core"/>
    <property type="match status" value="1"/>
</dbReference>
<dbReference type="FunFam" id="1.10.240.10:FF:000001">
    <property type="entry name" value="Tyrosine--tRNA ligase"/>
    <property type="match status" value="1"/>
</dbReference>
<dbReference type="FunFam" id="3.40.50.620:FF:000008">
    <property type="entry name" value="Tyrosine--tRNA ligase"/>
    <property type="match status" value="1"/>
</dbReference>
<dbReference type="Gene3D" id="3.40.50.620">
    <property type="entry name" value="HUPs"/>
    <property type="match status" value="1"/>
</dbReference>
<dbReference type="Gene3D" id="3.10.290.10">
    <property type="entry name" value="RNA-binding S4 domain"/>
    <property type="match status" value="1"/>
</dbReference>
<dbReference type="Gene3D" id="1.10.240.10">
    <property type="entry name" value="Tyrosyl-Transfer RNA Synthetase"/>
    <property type="match status" value="1"/>
</dbReference>
<dbReference type="HAMAP" id="MF_02006">
    <property type="entry name" value="Tyr_tRNA_synth_type1"/>
    <property type="match status" value="1"/>
</dbReference>
<dbReference type="InterPro" id="IPR002305">
    <property type="entry name" value="aa-tRNA-synth_Ic"/>
</dbReference>
<dbReference type="InterPro" id="IPR014729">
    <property type="entry name" value="Rossmann-like_a/b/a_fold"/>
</dbReference>
<dbReference type="InterPro" id="IPR036986">
    <property type="entry name" value="S4_RNA-bd_sf"/>
</dbReference>
<dbReference type="InterPro" id="IPR054608">
    <property type="entry name" value="SYY-like_C"/>
</dbReference>
<dbReference type="InterPro" id="IPR002307">
    <property type="entry name" value="Tyr-tRNA-ligase"/>
</dbReference>
<dbReference type="InterPro" id="IPR024088">
    <property type="entry name" value="Tyr-tRNA-ligase_bac-type"/>
</dbReference>
<dbReference type="InterPro" id="IPR024107">
    <property type="entry name" value="Tyr-tRNA-ligase_bac_1"/>
</dbReference>
<dbReference type="NCBIfam" id="TIGR00234">
    <property type="entry name" value="tyrS"/>
    <property type="match status" value="1"/>
</dbReference>
<dbReference type="PANTHER" id="PTHR11766:SF0">
    <property type="entry name" value="TYROSINE--TRNA LIGASE, MITOCHONDRIAL"/>
    <property type="match status" value="1"/>
</dbReference>
<dbReference type="PANTHER" id="PTHR11766">
    <property type="entry name" value="TYROSYL-TRNA SYNTHETASE"/>
    <property type="match status" value="1"/>
</dbReference>
<dbReference type="Pfam" id="PF22421">
    <property type="entry name" value="SYY_C-terminal"/>
    <property type="match status" value="1"/>
</dbReference>
<dbReference type="Pfam" id="PF00579">
    <property type="entry name" value="tRNA-synt_1b"/>
    <property type="match status" value="1"/>
</dbReference>
<dbReference type="PRINTS" id="PR01040">
    <property type="entry name" value="TRNASYNTHTYR"/>
</dbReference>
<dbReference type="SUPFAM" id="SSF55174">
    <property type="entry name" value="Alpha-L RNA-binding motif"/>
    <property type="match status" value="1"/>
</dbReference>
<dbReference type="SUPFAM" id="SSF52374">
    <property type="entry name" value="Nucleotidylyl transferase"/>
    <property type="match status" value="1"/>
</dbReference>
<dbReference type="PROSITE" id="PS50889">
    <property type="entry name" value="S4"/>
    <property type="match status" value="1"/>
</dbReference>
<evidence type="ECO:0000255" key="1">
    <source>
        <dbReference type="HAMAP-Rule" id="MF_02006"/>
    </source>
</evidence>
<protein>
    <recommendedName>
        <fullName evidence="1">Tyrosine--tRNA ligase</fullName>
        <ecNumber evidence="1">6.1.1.1</ecNumber>
    </recommendedName>
    <alternativeName>
        <fullName evidence="1">Tyrosyl-tRNA synthetase</fullName>
        <shortName evidence="1">TyrRS</shortName>
    </alternativeName>
</protein>
<sequence length="417" mass="46732">MLAFKSDFLHIMSERGFIHQISDEKGLDALFSKEVVSAYIGFDPTASSLHAGSLLQIMMLHWLQKTGHRPIALMGGGTGLIGDPSFKDEARPLLTQDDIATNIVSIKKVFANYLTFGEKETDACIINNAEWLCKLNYLEFLRDVGKHFSINRMLSFDSVRLRLEREHSLSFLEFNYMILQAYDFVELYKRYGLRMQMGGSDQWGNIINGIELGHRLGTPQLYAFTSPLLTTSSGAKMGKSLNGAVWLNADMLSPYQFWQYWRNTEDADVTRFLKLYTTLPMDEILKLSALQGTEINEAKKILATEITAMLHGRDLANTAAKTARKTFEEKTFGENLPTIEINASDLKTGAGLLALLVQAGLAKSNSEARRHIQGGGIRVNDQIIEDETCLILEEDINAQGIIKLSFGKKKHVLIKPL</sequence>